<accession>P0AF95</accession>
<accession>P39330</accession>
<accession>P76806</accession>
<name>RIDA_SHIFL</name>
<organism>
    <name type="scientific">Shigella flexneri</name>
    <dbReference type="NCBI Taxonomy" id="623"/>
    <lineage>
        <taxon>Bacteria</taxon>
        <taxon>Pseudomonadati</taxon>
        <taxon>Pseudomonadota</taxon>
        <taxon>Gammaproteobacteria</taxon>
        <taxon>Enterobacterales</taxon>
        <taxon>Enterobacteriaceae</taxon>
        <taxon>Shigella</taxon>
    </lineage>
</organism>
<comment type="function">
    <text evidence="3">Accelerates the release of ammonia from reactive enamine/imine intermediates of the PLP-dependent threonine dehydratase (IlvA) in the low water environment of the cell. It catalyzes the deamination of enamine/imine intermediates to yield 2-ketobutyrate and ammonia. May have a role in the purine metabolism (By similarity).</text>
</comment>
<comment type="catalytic activity">
    <reaction evidence="3">
        <text>2-iminobutanoate + H2O = 2-oxobutanoate + NH4(+)</text>
        <dbReference type="Rhea" id="RHEA:39975"/>
        <dbReference type="ChEBI" id="CHEBI:15377"/>
        <dbReference type="ChEBI" id="CHEBI:16763"/>
        <dbReference type="ChEBI" id="CHEBI:28938"/>
        <dbReference type="ChEBI" id="CHEBI:76545"/>
        <dbReference type="EC" id="3.5.99.10"/>
    </reaction>
</comment>
<comment type="catalytic activity">
    <reaction>
        <text>2-iminopropanoate + H2O = pyruvate + NH4(+)</text>
        <dbReference type="Rhea" id="RHEA:40671"/>
        <dbReference type="ChEBI" id="CHEBI:15361"/>
        <dbReference type="ChEBI" id="CHEBI:15377"/>
        <dbReference type="ChEBI" id="CHEBI:28938"/>
        <dbReference type="ChEBI" id="CHEBI:44400"/>
        <dbReference type="EC" id="3.5.99.10"/>
    </reaction>
</comment>
<comment type="pathway">
    <text evidence="3">Amino-acid biosynthesis; L-isoleucine biosynthesis; 2-oxobutanoate from L-threonine.</text>
</comment>
<comment type="subunit">
    <text evidence="2">Homotrimer.</text>
</comment>
<comment type="subcellular location">
    <subcellularLocation>
        <location evidence="4">Cytoplasm</location>
    </subcellularLocation>
</comment>
<comment type="similarity">
    <text evidence="4">Belongs to the RutC family.</text>
</comment>
<comment type="sequence caution" evidence="4">
    <conflict type="erroneous initiation">
        <sequence resource="EMBL-CDS" id="AAN45665"/>
    </conflict>
    <text>Extended N-terminus.</text>
</comment>
<comment type="sequence caution" evidence="4">
    <conflict type="erroneous initiation">
        <sequence resource="EMBL-CDS" id="AAP19453"/>
    </conflict>
    <text>Extended N-terminus.</text>
</comment>
<feature type="initiator methionine" description="Removed" evidence="1">
    <location>
        <position position="1"/>
    </location>
</feature>
<feature type="chain" id="PRO_0000170323" description="2-iminobutanoate/2-iminopropanoate deaminase">
    <location>
        <begin position="2"/>
        <end position="128"/>
    </location>
</feature>
<feature type="binding site" evidence="3">
    <location>
        <position position="105"/>
    </location>
    <ligand>
        <name>substrate</name>
    </ligand>
</feature>
<feature type="site" description="Stabilizes the substrate" evidence="3">
    <location>
        <position position="17"/>
    </location>
</feature>
<feature type="site" description="Important for catalytic activity at high pH" evidence="3">
    <location>
        <position position="120"/>
    </location>
</feature>
<dbReference type="EC" id="3.5.99.10" evidence="3"/>
<dbReference type="EMBL" id="AE005674">
    <property type="protein sequence ID" value="AAN45665.2"/>
    <property type="status" value="ALT_INIT"/>
    <property type="molecule type" value="Genomic_DNA"/>
</dbReference>
<dbReference type="EMBL" id="AE014073">
    <property type="protein sequence ID" value="AAP19453.1"/>
    <property type="status" value="ALT_INIT"/>
    <property type="molecule type" value="Genomic_DNA"/>
</dbReference>
<dbReference type="RefSeq" id="NP_709958.2">
    <property type="nucleotide sequence ID" value="NC_004337.2"/>
</dbReference>
<dbReference type="SMR" id="P0AF95"/>
<dbReference type="STRING" id="198214.SF4247"/>
<dbReference type="PaxDb" id="198214-SF4247"/>
<dbReference type="GeneID" id="1026589"/>
<dbReference type="KEGG" id="sfl:SF4247"/>
<dbReference type="KEGG" id="sfx:S4509"/>
<dbReference type="PATRIC" id="fig|198214.7.peg.5007"/>
<dbReference type="HOGENOM" id="CLU_100715_7_1_6"/>
<dbReference type="Proteomes" id="UP000001006">
    <property type="component" value="Chromosome"/>
</dbReference>
<dbReference type="Proteomes" id="UP000002673">
    <property type="component" value="Chromosome"/>
</dbReference>
<dbReference type="GO" id="GO:0005829">
    <property type="term" value="C:cytosol"/>
    <property type="evidence" value="ECO:0007669"/>
    <property type="project" value="TreeGrafter"/>
</dbReference>
<dbReference type="GO" id="GO:0120242">
    <property type="term" value="F:2-iminobutanoate deaminase activity"/>
    <property type="evidence" value="ECO:0000250"/>
    <property type="project" value="UniProtKB"/>
</dbReference>
<dbReference type="GO" id="GO:0120243">
    <property type="term" value="F:2-iminopropanoate deaminase activity"/>
    <property type="evidence" value="ECO:0007669"/>
    <property type="project" value="RHEA"/>
</dbReference>
<dbReference type="GO" id="GO:0009097">
    <property type="term" value="P:isoleucine biosynthetic process"/>
    <property type="evidence" value="ECO:0007669"/>
    <property type="project" value="UniProtKB-KW"/>
</dbReference>
<dbReference type="GO" id="GO:0009636">
    <property type="term" value="P:response to toxic substance"/>
    <property type="evidence" value="ECO:0007669"/>
    <property type="project" value="UniProtKB-KW"/>
</dbReference>
<dbReference type="CDD" id="cd00448">
    <property type="entry name" value="YjgF_YER057c_UK114_family"/>
    <property type="match status" value="1"/>
</dbReference>
<dbReference type="FunFam" id="3.30.1330.40:FF:000001">
    <property type="entry name" value="L-PSP family endoribonuclease"/>
    <property type="match status" value="1"/>
</dbReference>
<dbReference type="Gene3D" id="3.30.1330.40">
    <property type="entry name" value="RutC-like"/>
    <property type="match status" value="1"/>
</dbReference>
<dbReference type="InterPro" id="IPR006056">
    <property type="entry name" value="RidA"/>
</dbReference>
<dbReference type="InterPro" id="IPR019897">
    <property type="entry name" value="RidA_CS"/>
</dbReference>
<dbReference type="InterPro" id="IPR035959">
    <property type="entry name" value="RutC-like_sf"/>
</dbReference>
<dbReference type="InterPro" id="IPR006175">
    <property type="entry name" value="YjgF/YER057c/UK114"/>
</dbReference>
<dbReference type="NCBIfam" id="TIGR00004">
    <property type="entry name" value="Rid family detoxifying hydrolase"/>
    <property type="match status" value="1"/>
</dbReference>
<dbReference type="PANTHER" id="PTHR11803">
    <property type="entry name" value="2-IMINOBUTANOATE/2-IMINOPROPANOATE DEAMINASE RIDA"/>
    <property type="match status" value="1"/>
</dbReference>
<dbReference type="PANTHER" id="PTHR11803:SF39">
    <property type="entry name" value="2-IMINOBUTANOATE_2-IMINOPROPANOATE DEAMINASE"/>
    <property type="match status" value="1"/>
</dbReference>
<dbReference type="Pfam" id="PF01042">
    <property type="entry name" value="Ribonuc_L-PSP"/>
    <property type="match status" value="1"/>
</dbReference>
<dbReference type="SUPFAM" id="SSF55298">
    <property type="entry name" value="YjgF-like"/>
    <property type="match status" value="1"/>
</dbReference>
<dbReference type="PROSITE" id="PS01094">
    <property type="entry name" value="UPF0076"/>
    <property type="match status" value="1"/>
</dbReference>
<keyword id="KW-0028">Amino-acid biosynthesis</keyword>
<keyword id="KW-0100">Branched-chain amino acid biosynthesis</keyword>
<keyword id="KW-0963">Cytoplasm</keyword>
<keyword id="KW-0216">Detoxification</keyword>
<keyword id="KW-0378">Hydrolase</keyword>
<keyword id="KW-0412">Isoleucine biosynthesis</keyword>
<keyword id="KW-1185">Reference proteome</keyword>
<proteinExistence type="inferred from homology"/>
<sequence>MSKTIATENAPAAIGPYVQGVDLGNMIITSGQIPVNPKTGEVPADVAAQARQSLDNVKAIVEAAGLKVGDIVKTTVFVKDLNDFATVNATYEAFFTEHNATFPARSCVEVARLPKDVKIEIEAIAVRR</sequence>
<protein>
    <recommendedName>
        <fullName>2-iminobutanoate/2-iminopropanoate deaminase</fullName>
        <ecNumber evidence="3">3.5.99.10</ecNumber>
    </recommendedName>
    <alternativeName>
        <fullName>Enamine/imine deaminase</fullName>
    </alternativeName>
</protein>
<gene>
    <name type="primary">yjgF</name>
    <name type="ordered locus">SF4247</name>
    <name type="ordered locus">S4509</name>
</gene>
<evidence type="ECO:0000250" key="1"/>
<evidence type="ECO:0000250" key="2">
    <source>
        <dbReference type="UniProtKB" id="P0AF93"/>
    </source>
</evidence>
<evidence type="ECO:0000250" key="3">
    <source>
        <dbReference type="UniProtKB" id="Q7CP78"/>
    </source>
</evidence>
<evidence type="ECO:0000305" key="4"/>
<reference key="1">
    <citation type="journal article" date="2002" name="Nucleic Acids Res.">
        <title>Genome sequence of Shigella flexneri 2a: insights into pathogenicity through comparison with genomes of Escherichia coli K12 and O157.</title>
        <authorList>
            <person name="Jin Q."/>
            <person name="Yuan Z."/>
            <person name="Xu J."/>
            <person name="Wang Y."/>
            <person name="Shen Y."/>
            <person name="Lu W."/>
            <person name="Wang J."/>
            <person name="Liu H."/>
            <person name="Yang J."/>
            <person name="Yang F."/>
            <person name="Zhang X."/>
            <person name="Zhang J."/>
            <person name="Yang G."/>
            <person name="Wu H."/>
            <person name="Qu D."/>
            <person name="Dong J."/>
            <person name="Sun L."/>
            <person name="Xue Y."/>
            <person name="Zhao A."/>
            <person name="Gao Y."/>
            <person name="Zhu J."/>
            <person name="Kan B."/>
            <person name="Ding K."/>
            <person name="Chen S."/>
            <person name="Cheng H."/>
            <person name="Yao Z."/>
            <person name="He B."/>
            <person name="Chen R."/>
            <person name="Ma D."/>
            <person name="Qiang B."/>
            <person name="Wen Y."/>
            <person name="Hou Y."/>
            <person name="Yu J."/>
        </authorList>
    </citation>
    <scope>NUCLEOTIDE SEQUENCE [LARGE SCALE GENOMIC DNA]</scope>
    <source>
        <strain>301 / Serotype 2a</strain>
    </source>
</reference>
<reference key="2">
    <citation type="journal article" date="2003" name="Infect. Immun.">
        <title>Complete genome sequence and comparative genomics of Shigella flexneri serotype 2a strain 2457T.</title>
        <authorList>
            <person name="Wei J."/>
            <person name="Goldberg M.B."/>
            <person name="Burland V."/>
            <person name="Venkatesan M.M."/>
            <person name="Deng W."/>
            <person name="Fournier G."/>
            <person name="Mayhew G.F."/>
            <person name="Plunkett G. III"/>
            <person name="Rose D.J."/>
            <person name="Darling A."/>
            <person name="Mau B."/>
            <person name="Perna N.T."/>
            <person name="Payne S.M."/>
            <person name="Runyen-Janecky L.J."/>
            <person name="Zhou S."/>
            <person name="Schwartz D.C."/>
            <person name="Blattner F.R."/>
        </authorList>
    </citation>
    <scope>NUCLEOTIDE SEQUENCE [LARGE SCALE GENOMIC DNA]</scope>
    <source>
        <strain>ATCC 700930 / 2457T / Serotype 2a</strain>
    </source>
</reference>